<dbReference type="EMBL" id="CR380959">
    <property type="protein sequence ID" value="CAG62460.1"/>
    <property type="molecule type" value="Genomic_DNA"/>
</dbReference>
<dbReference type="RefSeq" id="XP_449484.1">
    <property type="nucleotide sequence ID" value="XM_449484.1"/>
</dbReference>
<dbReference type="SMR" id="Q6FJW0"/>
<dbReference type="FunCoup" id="Q6FJW0">
    <property type="interactions" value="35"/>
</dbReference>
<dbReference type="STRING" id="284593.Q6FJW0"/>
<dbReference type="EnsemblFungi" id="CAGL0M03157g-T">
    <property type="protein sequence ID" value="CAGL0M03157g-T-p1"/>
    <property type="gene ID" value="CAGL0M03157g"/>
</dbReference>
<dbReference type="KEGG" id="cgr:2891492"/>
<dbReference type="CGD" id="CAL0136569">
    <property type="gene designation" value="CAGL0M03157g"/>
</dbReference>
<dbReference type="VEuPathDB" id="FungiDB:CAGL0M03157g"/>
<dbReference type="eggNOG" id="KOG0998">
    <property type="taxonomic scope" value="Eukaryota"/>
</dbReference>
<dbReference type="HOGENOM" id="CLU_329816_0_0_1"/>
<dbReference type="InParanoid" id="Q6FJW0"/>
<dbReference type="Proteomes" id="UP000002428">
    <property type="component" value="Chromosome M"/>
</dbReference>
<dbReference type="GO" id="GO:0005737">
    <property type="term" value="C:cytoplasm"/>
    <property type="evidence" value="ECO:0007669"/>
    <property type="project" value="TreeGrafter"/>
</dbReference>
<dbReference type="GO" id="GO:0005886">
    <property type="term" value="C:plasma membrane"/>
    <property type="evidence" value="ECO:0007669"/>
    <property type="project" value="TreeGrafter"/>
</dbReference>
<dbReference type="GO" id="GO:0006897">
    <property type="term" value="P:endocytosis"/>
    <property type="evidence" value="ECO:0007669"/>
    <property type="project" value="UniProtKB-ARBA"/>
</dbReference>
<dbReference type="GO" id="GO:0006629">
    <property type="term" value="P:lipid metabolic process"/>
    <property type="evidence" value="ECO:0007669"/>
    <property type="project" value="UniProtKB-KW"/>
</dbReference>
<dbReference type="CDD" id="cd00052">
    <property type="entry name" value="EH"/>
    <property type="match status" value="1"/>
</dbReference>
<dbReference type="Gene3D" id="1.10.238.10">
    <property type="entry name" value="EF-hand"/>
    <property type="match status" value="1"/>
</dbReference>
<dbReference type="InterPro" id="IPR011992">
    <property type="entry name" value="EF-hand-dom_pair"/>
</dbReference>
<dbReference type="InterPro" id="IPR000261">
    <property type="entry name" value="EH_dom"/>
</dbReference>
<dbReference type="PANTHER" id="PTHR11216">
    <property type="entry name" value="EH DOMAIN"/>
    <property type="match status" value="1"/>
</dbReference>
<dbReference type="PANTHER" id="PTHR11216:SF174">
    <property type="entry name" value="GH06923P"/>
    <property type="match status" value="1"/>
</dbReference>
<dbReference type="Pfam" id="PF12763">
    <property type="entry name" value="EH"/>
    <property type="match status" value="1"/>
</dbReference>
<dbReference type="SMART" id="SM00027">
    <property type="entry name" value="EH"/>
    <property type="match status" value="1"/>
</dbReference>
<dbReference type="SUPFAM" id="SSF47473">
    <property type="entry name" value="EF-hand"/>
    <property type="match status" value="1"/>
</dbReference>
<dbReference type="PROSITE" id="PS50031">
    <property type="entry name" value="EH"/>
    <property type="match status" value="1"/>
</dbReference>
<sequence length="870" mass="96331">MHMRLNKRRRNHVQEQMSELPQDAKNDSLAAAQVIFKRHADNANSTPPSPVGLDSAGHLDKQADTAQRVHKVGTPSGTSSSHNSGNEGMHKVTKPLGENTATTAPIAIKQPVRVVRASPTAIVSPTSHTPLDAATAAANVVAEKSKIRTTQQQLQDKKRRDIENAHHAASAAAVTSSNLAVGSPPSQYIPSVPTLNVTSPQMRNSSQNIDRRSKSNEEAHNGHEKMMNSRSNSINSSTIKGSVSEPNTVTPLRQNSPSNMDDIIQKMEAVDIDEGRKNSFVMNGSGDSVDSLKPNVVRRPMRTPSGRRVRPPSPIDKIGSIQEPHLESTGFNDQNDFSEMSSLIDGSSSEDITKIRGSGIRERSPVDGVEHGGMSVNIPMQRSLSSDVLSPSQQAAMVAATKLSPSTQTLPVEELEYLASTGDVSAYKALNKINGTNMAYKGTIPDLIPSRARAQKTSKLKFKIFGGGKNSDRRNNATPIGYDPVMNISTDFGGKKVVESNQNNVKFKTTMRSQKYLGNDNLDDNDLRTQYIDDDDDDDDYDSAYEDLDYSRDDSEAMYKGDRESSNPRSNSLLQSSSYSGKVGFNSNANSGTSINNSGNVSNLDYSLRDGVAEKKKSRRDKIKKKLKSTASVVPYYPHYALTHLASGVSTVNSNLNNSNKNTKWFNEDKPWKSHKDVGFVTSQERKRYEAMWVTNRYLYLNLLPWWPKEEVEKDEDDSASNLNSNASTNVGGVLSDGDNEEDDVTRFLLSLPADGLMLNLVAKDIWERSNLPNDLLKQIYDLVDTRKDGTLNRESFLVGMWLVDQCLYGRKLPQELDPKIWDSVDRWVLNVVNSTMMTALERKQKKKMMKKELKNIKREQKQAIAEQHN</sequence>
<proteinExistence type="inferred from homology"/>
<organism>
    <name type="scientific">Candida glabrata (strain ATCC 2001 / BCRC 20586 / JCM 3761 / NBRC 0622 / NRRL Y-65 / CBS 138)</name>
    <name type="common">Yeast</name>
    <name type="synonym">Nakaseomyces glabratus</name>
    <dbReference type="NCBI Taxonomy" id="284593"/>
    <lineage>
        <taxon>Eukaryota</taxon>
        <taxon>Fungi</taxon>
        <taxon>Dikarya</taxon>
        <taxon>Ascomycota</taxon>
        <taxon>Saccharomycotina</taxon>
        <taxon>Saccharomycetes</taxon>
        <taxon>Saccharomycetales</taxon>
        <taxon>Saccharomycetaceae</taxon>
        <taxon>Nakaseomyces</taxon>
    </lineage>
</organism>
<gene>
    <name type="primary">IRS4</name>
    <name type="ordered locus">CAGL0M03157g</name>
</gene>
<comment type="function">
    <text evidence="1">Positive regulator of phosphatidylinositol 4,5-bisphosphate turnover and negatively regulates signaling through the cell integrity pathway. Involved in rDNA silencing (By similarity).</text>
</comment>
<comment type="similarity">
    <text evidence="4">Belongs to the IRS4 family.</text>
</comment>
<reference key="1">
    <citation type="journal article" date="2004" name="Nature">
        <title>Genome evolution in yeasts.</title>
        <authorList>
            <person name="Dujon B."/>
            <person name="Sherman D."/>
            <person name="Fischer G."/>
            <person name="Durrens P."/>
            <person name="Casaregola S."/>
            <person name="Lafontaine I."/>
            <person name="de Montigny J."/>
            <person name="Marck C."/>
            <person name="Neuveglise C."/>
            <person name="Talla E."/>
            <person name="Goffard N."/>
            <person name="Frangeul L."/>
            <person name="Aigle M."/>
            <person name="Anthouard V."/>
            <person name="Babour A."/>
            <person name="Barbe V."/>
            <person name="Barnay S."/>
            <person name="Blanchin S."/>
            <person name="Beckerich J.-M."/>
            <person name="Beyne E."/>
            <person name="Bleykasten C."/>
            <person name="Boisrame A."/>
            <person name="Boyer J."/>
            <person name="Cattolico L."/>
            <person name="Confanioleri F."/>
            <person name="de Daruvar A."/>
            <person name="Despons L."/>
            <person name="Fabre E."/>
            <person name="Fairhead C."/>
            <person name="Ferry-Dumazet H."/>
            <person name="Groppi A."/>
            <person name="Hantraye F."/>
            <person name="Hennequin C."/>
            <person name="Jauniaux N."/>
            <person name="Joyet P."/>
            <person name="Kachouri R."/>
            <person name="Kerrest A."/>
            <person name="Koszul R."/>
            <person name="Lemaire M."/>
            <person name="Lesur I."/>
            <person name="Ma L."/>
            <person name="Muller H."/>
            <person name="Nicaud J.-M."/>
            <person name="Nikolski M."/>
            <person name="Oztas S."/>
            <person name="Ozier-Kalogeropoulos O."/>
            <person name="Pellenz S."/>
            <person name="Potier S."/>
            <person name="Richard G.-F."/>
            <person name="Straub M.-L."/>
            <person name="Suleau A."/>
            <person name="Swennen D."/>
            <person name="Tekaia F."/>
            <person name="Wesolowski-Louvel M."/>
            <person name="Westhof E."/>
            <person name="Wirth B."/>
            <person name="Zeniou-Meyer M."/>
            <person name="Zivanovic Y."/>
            <person name="Bolotin-Fukuhara M."/>
            <person name="Thierry A."/>
            <person name="Bouchier C."/>
            <person name="Caudron B."/>
            <person name="Scarpelli C."/>
            <person name="Gaillardin C."/>
            <person name="Weissenbach J."/>
            <person name="Wincker P."/>
            <person name="Souciet J.-L."/>
        </authorList>
    </citation>
    <scope>NUCLEOTIDE SEQUENCE [LARGE SCALE GENOMIC DNA]</scope>
    <source>
        <strain>ATCC 2001 / BCRC 20586 / JCM 3761 / NBRC 0622 / NRRL Y-65 / CBS 138</strain>
    </source>
</reference>
<feature type="chain" id="PRO_0000308753" description="Increased rDNA silencing protein 4">
    <location>
        <begin position="1"/>
        <end position="870"/>
    </location>
</feature>
<feature type="domain" description="EH" evidence="2">
    <location>
        <begin position="739"/>
        <end position="828"/>
    </location>
</feature>
<feature type="region of interest" description="Disordered" evidence="3">
    <location>
        <begin position="1"/>
        <end position="25"/>
    </location>
</feature>
<feature type="region of interest" description="Disordered" evidence="3">
    <location>
        <begin position="38"/>
        <end position="57"/>
    </location>
</feature>
<feature type="region of interest" description="Disordered" evidence="3">
    <location>
        <begin position="62"/>
        <end position="92"/>
    </location>
</feature>
<feature type="region of interest" description="Disordered" evidence="3">
    <location>
        <begin position="147"/>
        <end position="260"/>
    </location>
</feature>
<feature type="region of interest" description="Disordered" evidence="3">
    <location>
        <begin position="275"/>
        <end position="315"/>
    </location>
</feature>
<feature type="region of interest" description="Disordered" evidence="3">
    <location>
        <begin position="516"/>
        <end position="579"/>
    </location>
</feature>
<feature type="region of interest" description="Disordered" evidence="3">
    <location>
        <begin position="717"/>
        <end position="738"/>
    </location>
</feature>
<feature type="compositionally biased region" description="Basic residues" evidence="3">
    <location>
        <begin position="1"/>
        <end position="11"/>
    </location>
</feature>
<feature type="compositionally biased region" description="Polar residues" evidence="3">
    <location>
        <begin position="75"/>
        <end position="86"/>
    </location>
</feature>
<feature type="compositionally biased region" description="Basic and acidic residues" evidence="3">
    <location>
        <begin position="155"/>
        <end position="166"/>
    </location>
</feature>
<feature type="compositionally biased region" description="Low complexity" evidence="3">
    <location>
        <begin position="167"/>
        <end position="181"/>
    </location>
</feature>
<feature type="compositionally biased region" description="Polar residues" evidence="3">
    <location>
        <begin position="184"/>
        <end position="208"/>
    </location>
</feature>
<feature type="compositionally biased region" description="Basic and acidic residues" evidence="3">
    <location>
        <begin position="209"/>
        <end position="227"/>
    </location>
</feature>
<feature type="compositionally biased region" description="Low complexity" evidence="3">
    <location>
        <begin position="228"/>
        <end position="237"/>
    </location>
</feature>
<feature type="compositionally biased region" description="Polar residues" evidence="3">
    <location>
        <begin position="238"/>
        <end position="259"/>
    </location>
</feature>
<feature type="compositionally biased region" description="Basic residues" evidence="3">
    <location>
        <begin position="299"/>
        <end position="310"/>
    </location>
</feature>
<feature type="compositionally biased region" description="Acidic residues" evidence="3">
    <location>
        <begin position="532"/>
        <end position="548"/>
    </location>
</feature>
<feature type="compositionally biased region" description="Basic and acidic residues" evidence="3">
    <location>
        <begin position="549"/>
        <end position="566"/>
    </location>
</feature>
<feature type="compositionally biased region" description="Low complexity" evidence="3">
    <location>
        <begin position="567"/>
        <end position="579"/>
    </location>
</feature>
<feature type="compositionally biased region" description="Low complexity" evidence="3">
    <location>
        <begin position="720"/>
        <end position="730"/>
    </location>
</feature>
<accession>Q6FJW0</accession>
<keyword id="KW-0443">Lipid metabolism</keyword>
<keyword id="KW-1185">Reference proteome</keyword>
<evidence type="ECO:0000250" key="1"/>
<evidence type="ECO:0000255" key="2">
    <source>
        <dbReference type="PROSITE-ProRule" id="PRU00077"/>
    </source>
</evidence>
<evidence type="ECO:0000256" key="3">
    <source>
        <dbReference type="SAM" id="MobiDB-lite"/>
    </source>
</evidence>
<evidence type="ECO:0000305" key="4"/>
<name>IRS4_CANGA</name>
<protein>
    <recommendedName>
        <fullName>Increased rDNA silencing protein 4</fullName>
    </recommendedName>
</protein>